<reference key="1">
    <citation type="journal article" date="2000" name="Science">
        <title>The genome sequence of Drosophila melanogaster.</title>
        <authorList>
            <person name="Adams M.D."/>
            <person name="Celniker S.E."/>
            <person name="Holt R.A."/>
            <person name="Evans C.A."/>
            <person name="Gocayne J.D."/>
            <person name="Amanatides P.G."/>
            <person name="Scherer S.E."/>
            <person name="Li P.W."/>
            <person name="Hoskins R.A."/>
            <person name="Galle R.F."/>
            <person name="George R.A."/>
            <person name="Lewis S.E."/>
            <person name="Richards S."/>
            <person name="Ashburner M."/>
            <person name="Henderson S.N."/>
            <person name="Sutton G.G."/>
            <person name="Wortman J.R."/>
            <person name="Yandell M.D."/>
            <person name="Zhang Q."/>
            <person name="Chen L.X."/>
            <person name="Brandon R.C."/>
            <person name="Rogers Y.-H.C."/>
            <person name="Blazej R.G."/>
            <person name="Champe M."/>
            <person name="Pfeiffer B.D."/>
            <person name="Wan K.H."/>
            <person name="Doyle C."/>
            <person name="Baxter E.G."/>
            <person name="Helt G."/>
            <person name="Nelson C.R."/>
            <person name="Miklos G.L.G."/>
            <person name="Abril J.F."/>
            <person name="Agbayani A."/>
            <person name="An H.-J."/>
            <person name="Andrews-Pfannkoch C."/>
            <person name="Baldwin D."/>
            <person name="Ballew R.M."/>
            <person name="Basu A."/>
            <person name="Baxendale J."/>
            <person name="Bayraktaroglu L."/>
            <person name="Beasley E.M."/>
            <person name="Beeson K.Y."/>
            <person name="Benos P.V."/>
            <person name="Berman B.P."/>
            <person name="Bhandari D."/>
            <person name="Bolshakov S."/>
            <person name="Borkova D."/>
            <person name="Botchan M.R."/>
            <person name="Bouck J."/>
            <person name="Brokstein P."/>
            <person name="Brottier P."/>
            <person name="Burtis K.C."/>
            <person name="Busam D.A."/>
            <person name="Butler H."/>
            <person name="Cadieu E."/>
            <person name="Center A."/>
            <person name="Chandra I."/>
            <person name="Cherry J.M."/>
            <person name="Cawley S."/>
            <person name="Dahlke C."/>
            <person name="Davenport L.B."/>
            <person name="Davies P."/>
            <person name="de Pablos B."/>
            <person name="Delcher A."/>
            <person name="Deng Z."/>
            <person name="Mays A.D."/>
            <person name="Dew I."/>
            <person name="Dietz S.M."/>
            <person name="Dodson K."/>
            <person name="Doup L.E."/>
            <person name="Downes M."/>
            <person name="Dugan-Rocha S."/>
            <person name="Dunkov B.C."/>
            <person name="Dunn P."/>
            <person name="Durbin K.J."/>
            <person name="Evangelista C.C."/>
            <person name="Ferraz C."/>
            <person name="Ferriera S."/>
            <person name="Fleischmann W."/>
            <person name="Fosler C."/>
            <person name="Gabrielian A.E."/>
            <person name="Garg N.S."/>
            <person name="Gelbart W.M."/>
            <person name="Glasser K."/>
            <person name="Glodek A."/>
            <person name="Gong F."/>
            <person name="Gorrell J.H."/>
            <person name="Gu Z."/>
            <person name="Guan P."/>
            <person name="Harris M."/>
            <person name="Harris N.L."/>
            <person name="Harvey D.A."/>
            <person name="Heiman T.J."/>
            <person name="Hernandez J.R."/>
            <person name="Houck J."/>
            <person name="Hostin D."/>
            <person name="Houston K.A."/>
            <person name="Howland T.J."/>
            <person name="Wei M.-H."/>
            <person name="Ibegwam C."/>
            <person name="Jalali M."/>
            <person name="Kalush F."/>
            <person name="Karpen G.H."/>
            <person name="Ke Z."/>
            <person name="Kennison J.A."/>
            <person name="Ketchum K.A."/>
            <person name="Kimmel B.E."/>
            <person name="Kodira C.D."/>
            <person name="Kraft C.L."/>
            <person name="Kravitz S."/>
            <person name="Kulp D."/>
            <person name="Lai Z."/>
            <person name="Lasko P."/>
            <person name="Lei Y."/>
            <person name="Levitsky A.A."/>
            <person name="Li J.H."/>
            <person name="Li Z."/>
            <person name="Liang Y."/>
            <person name="Lin X."/>
            <person name="Liu X."/>
            <person name="Mattei B."/>
            <person name="McIntosh T.C."/>
            <person name="McLeod M.P."/>
            <person name="McPherson D."/>
            <person name="Merkulov G."/>
            <person name="Milshina N.V."/>
            <person name="Mobarry C."/>
            <person name="Morris J."/>
            <person name="Moshrefi A."/>
            <person name="Mount S.M."/>
            <person name="Moy M."/>
            <person name="Murphy B."/>
            <person name="Murphy L."/>
            <person name="Muzny D.M."/>
            <person name="Nelson D.L."/>
            <person name="Nelson D.R."/>
            <person name="Nelson K.A."/>
            <person name="Nixon K."/>
            <person name="Nusskern D.R."/>
            <person name="Pacleb J.M."/>
            <person name="Palazzolo M."/>
            <person name="Pittman G.S."/>
            <person name="Pan S."/>
            <person name="Pollard J."/>
            <person name="Puri V."/>
            <person name="Reese M.G."/>
            <person name="Reinert K."/>
            <person name="Remington K."/>
            <person name="Saunders R.D.C."/>
            <person name="Scheeler F."/>
            <person name="Shen H."/>
            <person name="Shue B.C."/>
            <person name="Siden-Kiamos I."/>
            <person name="Simpson M."/>
            <person name="Skupski M.P."/>
            <person name="Smith T.J."/>
            <person name="Spier E."/>
            <person name="Spradling A.C."/>
            <person name="Stapleton M."/>
            <person name="Strong R."/>
            <person name="Sun E."/>
            <person name="Svirskas R."/>
            <person name="Tector C."/>
            <person name="Turner R."/>
            <person name="Venter E."/>
            <person name="Wang A.H."/>
            <person name="Wang X."/>
            <person name="Wang Z.-Y."/>
            <person name="Wassarman D.A."/>
            <person name="Weinstock G.M."/>
            <person name="Weissenbach J."/>
            <person name="Williams S.M."/>
            <person name="Woodage T."/>
            <person name="Worley K.C."/>
            <person name="Wu D."/>
            <person name="Yang S."/>
            <person name="Yao Q.A."/>
            <person name="Ye J."/>
            <person name="Yeh R.-F."/>
            <person name="Zaveri J.S."/>
            <person name="Zhan M."/>
            <person name="Zhang G."/>
            <person name="Zhao Q."/>
            <person name="Zheng L."/>
            <person name="Zheng X.H."/>
            <person name="Zhong F.N."/>
            <person name="Zhong W."/>
            <person name="Zhou X."/>
            <person name="Zhu S.C."/>
            <person name="Zhu X."/>
            <person name="Smith H.O."/>
            <person name="Gibbs R.A."/>
            <person name="Myers E.W."/>
            <person name="Rubin G.M."/>
            <person name="Venter J.C."/>
        </authorList>
    </citation>
    <scope>NUCLEOTIDE SEQUENCE [LARGE SCALE GENOMIC DNA]</scope>
    <source>
        <strain>Berkeley</strain>
    </source>
</reference>
<reference key="2">
    <citation type="journal article" date="2002" name="Genome Biol.">
        <title>Annotation of the Drosophila melanogaster euchromatic genome: a systematic review.</title>
        <authorList>
            <person name="Misra S."/>
            <person name="Crosby M.A."/>
            <person name="Mungall C.J."/>
            <person name="Matthews B.B."/>
            <person name="Campbell K.S."/>
            <person name="Hradecky P."/>
            <person name="Huang Y."/>
            <person name="Kaminker J.S."/>
            <person name="Millburn G.H."/>
            <person name="Prochnik S.E."/>
            <person name="Smith C.D."/>
            <person name="Tupy J.L."/>
            <person name="Whitfield E.J."/>
            <person name="Bayraktaroglu L."/>
            <person name="Berman B.P."/>
            <person name="Bettencourt B.R."/>
            <person name="Celniker S.E."/>
            <person name="de Grey A.D.N.J."/>
            <person name="Drysdale R.A."/>
            <person name="Harris N.L."/>
            <person name="Richter J."/>
            <person name="Russo S."/>
            <person name="Schroeder A.J."/>
            <person name="Shu S.Q."/>
            <person name="Stapleton M."/>
            <person name="Yamada C."/>
            <person name="Ashburner M."/>
            <person name="Gelbart W.M."/>
            <person name="Rubin G.M."/>
            <person name="Lewis S.E."/>
        </authorList>
    </citation>
    <scope>GENOME REANNOTATION</scope>
    <source>
        <strain>Berkeley</strain>
    </source>
</reference>
<reference key="3">
    <citation type="journal article" date="1995" name="Proc. Natl. Acad. Sci. U.S.A.">
        <title>The Ste locus, a component of the parasitic cry-Ste system of Drosophila melanogaster, encodes a protein that forms crystals in primary spermatocytes and mimics properties of the beta subunit of casein kinase 2.</title>
        <authorList>
            <person name="Bozzetti M.P."/>
            <person name="Massari S."/>
            <person name="Finelli P."/>
            <person name="Meggio F."/>
            <person name="Pinna L.A."/>
            <person name="Boldyreff B."/>
            <person name="Issinger O.G."/>
            <person name="Palumbo G."/>
            <person name="Ciriaco C."/>
            <person name="Bonaccorsi S."/>
            <person name="Pimpinelli S."/>
        </authorList>
    </citation>
    <scope>TISSUE SPECIFICITY</scope>
    <scope>INTERACTION WITH CKII-ALPHA</scope>
</reference>
<reference key="4">
    <citation type="journal article" date="2001" name="Chromosoma">
        <title>A role of the Drosophila homeless gene in repression of Stellate in male meiosis.</title>
        <authorList>
            <person name="Stapleton W."/>
            <person name="Das S."/>
            <person name="McKee B.D."/>
        </authorList>
    </citation>
    <scope>INDUCTION</scope>
</reference>
<reference key="5">
    <citation type="journal article" date="2001" name="Curr. Biol.">
        <title>Double-stranded RNA-mediated silencing of genomic tandem repeats and transposable elements in the D. melanogaster germline.</title>
        <authorList>
            <person name="Aravin A.A."/>
            <person name="Naumova N.M."/>
            <person name="Tulin A.V."/>
            <person name="Vagin V.V."/>
            <person name="Rozovsky Y.M."/>
            <person name="Gvozdev V.A."/>
        </authorList>
    </citation>
    <scope>INDUCTION</scope>
</reference>
<dbReference type="EMBL" id="AE014298">
    <property type="protein sequence ID" value="AAS65336.3"/>
    <property type="molecule type" value="Genomic_DNA"/>
</dbReference>
<dbReference type="RefSeq" id="NP_996430.3">
    <property type="nucleotide sequence ID" value="NM_206707.3"/>
</dbReference>
<dbReference type="SMR" id="Q7KV14"/>
<dbReference type="FunCoup" id="Q7KV14">
    <property type="interactions" value="168"/>
</dbReference>
<dbReference type="STRING" id="7227.FBpp0289364"/>
<dbReference type="PaxDb" id="7227-FBpp0289364"/>
<dbReference type="EnsemblMetazoa" id="FBtr0300087">
    <property type="protein sequence ID" value="FBpp0289364"/>
    <property type="gene ID" value="FBgn0053238"/>
</dbReference>
<dbReference type="GeneID" id="2768902"/>
<dbReference type="KEGG" id="dme:Dmel_CG33238"/>
<dbReference type="UCSC" id="CG33238-RB">
    <property type="organism name" value="d. melanogaster"/>
</dbReference>
<dbReference type="AGR" id="FB:FBgn0003523"/>
<dbReference type="AGR" id="FB:FBgn0053238"/>
<dbReference type="CTD" id="2768902"/>
<dbReference type="FlyBase" id="FBgn0053238">
    <property type="gene designation" value="Ste:CG33238"/>
</dbReference>
<dbReference type="VEuPathDB" id="VectorBase:FBgn0053238"/>
<dbReference type="eggNOG" id="KOG3092">
    <property type="taxonomic scope" value="Eukaryota"/>
</dbReference>
<dbReference type="GeneTree" id="ENSGT00390000003781"/>
<dbReference type="HOGENOM" id="CLU_034027_3_3_1"/>
<dbReference type="InParanoid" id="Q7KV14"/>
<dbReference type="OrthoDB" id="3971593at2759"/>
<dbReference type="PhylomeDB" id="Q7KV14"/>
<dbReference type="GenomeRNAi" id="2768902"/>
<dbReference type="PRO" id="PR:Q7KV14"/>
<dbReference type="Proteomes" id="UP000000803">
    <property type="component" value="Chromosome X"/>
</dbReference>
<dbReference type="GO" id="GO:0005737">
    <property type="term" value="C:cytoplasm"/>
    <property type="evidence" value="ECO:0000314"/>
    <property type="project" value="FlyBase"/>
</dbReference>
<dbReference type="GO" id="GO:0005634">
    <property type="term" value="C:nucleus"/>
    <property type="evidence" value="ECO:0000314"/>
    <property type="project" value="FlyBase"/>
</dbReference>
<dbReference type="GO" id="GO:0005956">
    <property type="term" value="C:protein kinase CK2 complex"/>
    <property type="evidence" value="ECO:0000314"/>
    <property type="project" value="FlyBase"/>
</dbReference>
<dbReference type="GO" id="GO:0019887">
    <property type="term" value="F:protein kinase regulator activity"/>
    <property type="evidence" value="ECO:0000315"/>
    <property type="project" value="FlyBase"/>
</dbReference>
<dbReference type="FunFam" id="1.10.1820.10:FF:000005">
    <property type="entry name" value="Casein kinase II subunit beta"/>
    <property type="match status" value="1"/>
</dbReference>
<dbReference type="FunFam" id="2.20.25.20:FF:000001">
    <property type="entry name" value="Casein kinase II subunit beta"/>
    <property type="match status" value="1"/>
</dbReference>
<dbReference type="Gene3D" id="2.20.25.20">
    <property type="match status" value="1"/>
</dbReference>
<dbReference type="Gene3D" id="1.10.1820.10">
    <property type="entry name" value="protein kinase ck2 holoenzyme, chain C, domain 1"/>
    <property type="match status" value="1"/>
</dbReference>
<dbReference type="InterPro" id="IPR016149">
    <property type="entry name" value="Casein_kin_II_reg-sub_N"/>
</dbReference>
<dbReference type="InterPro" id="IPR035991">
    <property type="entry name" value="Casein_kinase_II_beta-like"/>
</dbReference>
<dbReference type="InterPro" id="IPR000704">
    <property type="entry name" value="Casein_kinase_II_reg-sub"/>
</dbReference>
<dbReference type="PANTHER" id="PTHR11740">
    <property type="entry name" value="CASEIN KINASE II SUBUNIT BETA"/>
    <property type="match status" value="1"/>
</dbReference>
<dbReference type="PANTHER" id="PTHR11740:SF0">
    <property type="entry name" value="CASEIN KINASE II SUBUNIT BETA"/>
    <property type="match status" value="1"/>
</dbReference>
<dbReference type="Pfam" id="PF01214">
    <property type="entry name" value="CK_II_beta"/>
    <property type="match status" value="1"/>
</dbReference>
<dbReference type="PRINTS" id="PR00472">
    <property type="entry name" value="CASNKINASEII"/>
</dbReference>
<dbReference type="SMART" id="SM01085">
    <property type="entry name" value="CK_II_beta"/>
    <property type="match status" value="1"/>
</dbReference>
<dbReference type="SUPFAM" id="SSF57798">
    <property type="entry name" value="Casein kinase II beta subunit"/>
    <property type="match status" value="1"/>
</dbReference>
<dbReference type="PROSITE" id="PS01101">
    <property type="entry name" value="CK2_BETA"/>
    <property type="match status" value="1"/>
</dbReference>
<comment type="function">
    <text>Unknown. In males lacking the Y chromosome, its strong overexpression leads to the appearance of proteinaceous star-shaped crystals in the primary spermatocytes causing meiotic drive, possibly by interfering with normal casein kinase 2 activity.</text>
</comment>
<comment type="subunit">
    <text evidence="3">Interacts in vitro with the casein kinase 2 alpha subunit (CkII-alpha). The relevance of such interaction is however unclear in vivo.</text>
</comment>
<comment type="tissue specificity">
    <text evidence="3">Probably not expressed in wild-type flies. In males lacking the Y chromosome, it is testis-specific and constitutes the main component of star-shaped crystals.</text>
</comment>
<comment type="induction">
    <text evidence="1 2">In wild-type flies, it is strongly down-regulated by double-stranded RNA (dsRNA) interference mediated by Su(Ste) transcripts. In males lacking the Y chromosome, the absence of Su(Ste) locus, relieves such down-regulation, explaining why it is strongly expressed.</text>
</comment>
<comment type="miscellaneous">
    <text>There are multiple copies of the stellate gene in fruit fly, encoding proteins that are extremely similar, which makes their individual characterization difficult. Thus, most experiments probably do not discriminate between the different members.</text>
</comment>
<comment type="similarity">
    <text evidence="4">Belongs to the casein kinase 2 subunit beta family.</text>
</comment>
<name>STEL3_DROME</name>
<protein>
    <recommendedName>
        <fullName>Stellate protein CG33238</fullName>
    </recommendedName>
</protein>
<keyword id="KW-1185">Reference proteome</keyword>
<gene>
    <name type="primary">Ste:CG33238</name>
    <name type="ORF">CG33238</name>
</gene>
<sequence length="172" mass="19600">MSSLENNNSSWIDWFLGIKGNQFLCRVPTDYVQDTFNQMGLEYFSEILDVILKPVIDSSSGLLYGDEKKWYGMIHARYIRSERGLIAMHRKYLRGDFGSCPNISCYRQNTLPVGLSAVWGKSTVKIHCPRCKSNFHPKSDTQLDGAMFGPSFPDIFFSMLPNLTSPLDDPRT</sequence>
<proteinExistence type="evidence at protein level"/>
<accession>Q7KV14</accession>
<organism>
    <name type="scientific">Drosophila melanogaster</name>
    <name type="common">Fruit fly</name>
    <dbReference type="NCBI Taxonomy" id="7227"/>
    <lineage>
        <taxon>Eukaryota</taxon>
        <taxon>Metazoa</taxon>
        <taxon>Ecdysozoa</taxon>
        <taxon>Arthropoda</taxon>
        <taxon>Hexapoda</taxon>
        <taxon>Insecta</taxon>
        <taxon>Pterygota</taxon>
        <taxon>Neoptera</taxon>
        <taxon>Endopterygota</taxon>
        <taxon>Diptera</taxon>
        <taxon>Brachycera</taxon>
        <taxon>Muscomorpha</taxon>
        <taxon>Ephydroidea</taxon>
        <taxon>Drosophilidae</taxon>
        <taxon>Drosophila</taxon>
        <taxon>Sophophora</taxon>
    </lineage>
</organism>
<evidence type="ECO:0000269" key="1">
    <source>
    </source>
</evidence>
<evidence type="ECO:0000269" key="2">
    <source>
    </source>
</evidence>
<evidence type="ECO:0000269" key="3">
    <source>
    </source>
</evidence>
<evidence type="ECO:0000305" key="4"/>
<feature type="chain" id="PRO_0000068261" description="Stellate protein CG33238">
    <location>
        <begin position="1"/>
        <end position="172"/>
    </location>
</feature>